<feature type="chain" id="PRO_1000069375" description="Lipoate-protein ligase A">
    <location>
        <begin position="1"/>
        <end position="338"/>
    </location>
</feature>
<feature type="domain" description="BPL/LPL catalytic" evidence="2">
    <location>
        <begin position="29"/>
        <end position="216"/>
    </location>
</feature>
<feature type="binding site" evidence="1">
    <location>
        <position position="71"/>
    </location>
    <ligand>
        <name>ATP</name>
        <dbReference type="ChEBI" id="CHEBI:30616"/>
    </ligand>
</feature>
<feature type="binding site" evidence="1">
    <location>
        <begin position="76"/>
        <end position="79"/>
    </location>
    <ligand>
        <name>ATP</name>
        <dbReference type="ChEBI" id="CHEBI:30616"/>
    </ligand>
</feature>
<feature type="binding site" evidence="1">
    <location>
        <position position="134"/>
    </location>
    <ligand>
        <name>(R)-lipoate</name>
        <dbReference type="ChEBI" id="CHEBI:83088"/>
    </ligand>
</feature>
<feature type="binding site" evidence="1">
    <location>
        <position position="134"/>
    </location>
    <ligand>
        <name>ATP</name>
        <dbReference type="ChEBI" id="CHEBI:30616"/>
    </ligand>
</feature>
<comment type="function">
    <text evidence="1">Catalyzes both the ATP-dependent activation of exogenously supplied lipoate to lipoyl-AMP and the transfer of the activated lipoyl onto the lipoyl domains of lipoate-dependent enzymes.</text>
</comment>
<comment type="catalytic activity">
    <reaction evidence="1">
        <text>L-lysyl-[lipoyl-carrier protein] + (R)-lipoate + ATP = N(6)-[(R)-lipoyl]-L-lysyl-[lipoyl-carrier protein] + AMP + diphosphate + H(+)</text>
        <dbReference type="Rhea" id="RHEA:49288"/>
        <dbReference type="Rhea" id="RHEA-COMP:10500"/>
        <dbReference type="Rhea" id="RHEA-COMP:10502"/>
        <dbReference type="ChEBI" id="CHEBI:15378"/>
        <dbReference type="ChEBI" id="CHEBI:29969"/>
        <dbReference type="ChEBI" id="CHEBI:30616"/>
        <dbReference type="ChEBI" id="CHEBI:33019"/>
        <dbReference type="ChEBI" id="CHEBI:83088"/>
        <dbReference type="ChEBI" id="CHEBI:83099"/>
        <dbReference type="ChEBI" id="CHEBI:456215"/>
        <dbReference type="EC" id="6.3.1.20"/>
    </reaction>
</comment>
<comment type="pathway">
    <text evidence="1">Protein modification; protein lipoylation via exogenous pathway; protein N(6)-(lipoyl)lysine from lipoate: step 1/2.</text>
</comment>
<comment type="pathway">
    <text evidence="1">Protein modification; protein lipoylation via exogenous pathway; protein N(6)-(lipoyl)lysine from lipoate: step 2/2.</text>
</comment>
<comment type="subunit">
    <text evidence="1">Monomer.</text>
</comment>
<comment type="subcellular location">
    <subcellularLocation>
        <location evidence="1">Cytoplasm</location>
    </subcellularLocation>
</comment>
<comment type="miscellaneous">
    <text evidence="1">In the transfer reaction, the free carboxyl group of lipoic acid is attached via an amide linkage to the epsilon-amino group of a specific lysine residue of lipoyl domains of lipoate-dependent enzymes.</text>
</comment>
<comment type="similarity">
    <text evidence="1">Belongs to the LplA family.</text>
</comment>
<evidence type="ECO:0000255" key="1">
    <source>
        <dbReference type="HAMAP-Rule" id="MF_01602"/>
    </source>
</evidence>
<evidence type="ECO:0000255" key="2">
    <source>
        <dbReference type="PROSITE-ProRule" id="PRU01067"/>
    </source>
</evidence>
<name>LPLA_AERS4</name>
<proteinExistence type="inferred from homology"/>
<gene>
    <name evidence="1" type="primary">lplA</name>
    <name type="ordered locus">ASA_2980</name>
</gene>
<protein>
    <recommendedName>
        <fullName evidence="1">Lipoate-protein ligase A</fullName>
        <ecNumber evidence="1">6.3.1.20</ecNumber>
    </recommendedName>
    <alternativeName>
        <fullName evidence="1">Lipoate--protein ligase</fullName>
    </alternativeName>
</protein>
<organism>
    <name type="scientific">Aeromonas salmonicida (strain A449)</name>
    <dbReference type="NCBI Taxonomy" id="382245"/>
    <lineage>
        <taxon>Bacteria</taxon>
        <taxon>Pseudomonadati</taxon>
        <taxon>Pseudomonadota</taxon>
        <taxon>Gammaproteobacteria</taxon>
        <taxon>Aeromonadales</taxon>
        <taxon>Aeromonadaceae</taxon>
        <taxon>Aeromonas</taxon>
    </lineage>
</organism>
<keyword id="KW-0067">ATP-binding</keyword>
<keyword id="KW-0963">Cytoplasm</keyword>
<keyword id="KW-0436">Ligase</keyword>
<keyword id="KW-0547">Nucleotide-binding</keyword>
<sequence>MTALRLLVSDSHDPLFNLAVEECIFRQMDPNQRVLFLWRNANTVVIGRAQNPWKECNTRRMEEDGVTLARRSSGGGAVFHDLSNSCFIFMAGKPGYDKSISTAIALDALKLLGVSAFASGRNDLLVATQDGDRKVSGSAYRETHDRGFHHGTLLLDADLSRLANYLNPDPKKLAAKGISSVRSRVANLCELLPGIEHQQVSHALIEAFFAHYGARVSPEHISPTQLPDLPGFADTFARQRSWEWNFGHAPAFTHQLDERFDWGGVELHFDVEKGVIGRAQIFSDSLDPAPLDALAQRLVGVAYRSDAIAALFGQLKADFPARQAELDALAGWLQAALR</sequence>
<reference key="1">
    <citation type="journal article" date="2008" name="BMC Genomics">
        <title>The genome of Aeromonas salmonicida subsp. salmonicida A449: insights into the evolution of a fish pathogen.</title>
        <authorList>
            <person name="Reith M.E."/>
            <person name="Singh R.K."/>
            <person name="Curtis B."/>
            <person name="Boyd J.M."/>
            <person name="Bouevitch A."/>
            <person name="Kimball J."/>
            <person name="Munholland J."/>
            <person name="Murphy C."/>
            <person name="Sarty D."/>
            <person name="Williams J."/>
            <person name="Nash J.H."/>
            <person name="Johnson S.C."/>
            <person name="Brown L.L."/>
        </authorList>
    </citation>
    <scope>NUCLEOTIDE SEQUENCE [LARGE SCALE GENOMIC DNA]</scope>
    <source>
        <strain>A449</strain>
    </source>
</reference>
<dbReference type="EC" id="6.3.1.20" evidence="1"/>
<dbReference type="EMBL" id="CP000644">
    <property type="protein sequence ID" value="ABO90981.1"/>
    <property type="molecule type" value="Genomic_DNA"/>
</dbReference>
<dbReference type="RefSeq" id="WP_005312643.1">
    <property type="nucleotide sequence ID" value="NC_009348.1"/>
</dbReference>
<dbReference type="SMR" id="A4SQ09"/>
<dbReference type="STRING" id="29491.GCA_000820065_02251"/>
<dbReference type="KEGG" id="asa:ASA_2980"/>
<dbReference type="PATRIC" id="fig|382245.13.peg.2965"/>
<dbReference type="eggNOG" id="COG0095">
    <property type="taxonomic scope" value="Bacteria"/>
</dbReference>
<dbReference type="HOGENOM" id="CLU_022986_0_1_6"/>
<dbReference type="UniPathway" id="UPA00537">
    <property type="reaction ID" value="UER00594"/>
</dbReference>
<dbReference type="UniPathway" id="UPA00537">
    <property type="reaction ID" value="UER00595"/>
</dbReference>
<dbReference type="Proteomes" id="UP000000225">
    <property type="component" value="Chromosome"/>
</dbReference>
<dbReference type="GO" id="GO:0005829">
    <property type="term" value="C:cytosol"/>
    <property type="evidence" value="ECO:0007669"/>
    <property type="project" value="TreeGrafter"/>
</dbReference>
<dbReference type="GO" id="GO:0005524">
    <property type="term" value="F:ATP binding"/>
    <property type="evidence" value="ECO:0007669"/>
    <property type="project" value="UniProtKB-KW"/>
</dbReference>
<dbReference type="GO" id="GO:0016979">
    <property type="term" value="F:lipoate-protein ligase activity"/>
    <property type="evidence" value="ECO:0007669"/>
    <property type="project" value="UniProtKB-UniRule"/>
</dbReference>
<dbReference type="GO" id="GO:0017118">
    <property type="term" value="F:lipoyltransferase activity"/>
    <property type="evidence" value="ECO:0007669"/>
    <property type="project" value="TreeGrafter"/>
</dbReference>
<dbReference type="GO" id="GO:0036211">
    <property type="term" value="P:protein modification process"/>
    <property type="evidence" value="ECO:0007669"/>
    <property type="project" value="InterPro"/>
</dbReference>
<dbReference type="CDD" id="cd16443">
    <property type="entry name" value="LplA"/>
    <property type="match status" value="1"/>
</dbReference>
<dbReference type="FunFam" id="3.30.930.10:FF:000024">
    <property type="entry name" value="Lipoate-protein ligase A"/>
    <property type="match status" value="1"/>
</dbReference>
<dbReference type="Gene3D" id="3.30.930.10">
    <property type="entry name" value="Bira Bifunctional Protein, Domain 2"/>
    <property type="match status" value="1"/>
</dbReference>
<dbReference type="Gene3D" id="3.30.390.50">
    <property type="entry name" value="CO dehydrogenase flavoprotein, C-terminal domain"/>
    <property type="match status" value="1"/>
</dbReference>
<dbReference type="HAMAP" id="MF_01602">
    <property type="entry name" value="LplA"/>
    <property type="match status" value="1"/>
</dbReference>
<dbReference type="InterPro" id="IPR045864">
    <property type="entry name" value="aa-tRNA-synth_II/BPL/LPL"/>
</dbReference>
<dbReference type="InterPro" id="IPR004143">
    <property type="entry name" value="BPL_LPL_catalytic"/>
</dbReference>
<dbReference type="InterPro" id="IPR023741">
    <property type="entry name" value="Lipoate_ligase_A"/>
</dbReference>
<dbReference type="InterPro" id="IPR019491">
    <property type="entry name" value="Lipoate_protein_ligase_C"/>
</dbReference>
<dbReference type="InterPro" id="IPR004562">
    <property type="entry name" value="LipoylTrfase_LipoateP_Ligase"/>
</dbReference>
<dbReference type="NCBIfam" id="TIGR00545">
    <property type="entry name" value="lipoyltrans"/>
    <property type="match status" value="1"/>
</dbReference>
<dbReference type="PANTHER" id="PTHR12561">
    <property type="entry name" value="LIPOATE-PROTEIN LIGASE"/>
    <property type="match status" value="1"/>
</dbReference>
<dbReference type="PANTHER" id="PTHR12561:SF3">
    <property type="entry name" value="LIPOYLTRANSFERASE 1, MITOCHONDRIAL"/>
    <property type="match status" value="1"/>
</dbReference>
<dbReference type="Pfam" id="PF10437">
    <property type="entry name" value="Lip_prot_lig_C"/>
    <property type="match status" value="1"/>
</dbReference>
<dbReference type="Pfam" id="PF21948">
    <property type="entry name" value="LplA-B_cat"/>
    <property type="match status" value="1"/>
</dbReference>
<dbReference type="SUPFAM" id="SSF55681">
    <property type="entry name" value="Class II aaRS and biotin synthetases"/>
    <property type="match status" value="1"/>
</dbReference>
<dbReference type="SUPFAM" id="SSF82649">
    <property type="entry name" value="SufE/NifU"/>
    <property type="match status" value="1"/>
</dbReference>
<dbReference type="PROSITE" id="PS51733">
    <property type="entry name" value="BPL_LPL_CATALYTIC"/>
    <property type="match status" value="1"/>
</dbReference>
<accession>A4SQ09</accession>